<feature type="chain" id="PRO_0000345243" description="tRNA uridine 5-carboxymethylaminomethyl modification enzyme MnmG">
    <location>
        <begin position="1"/>
        <end position="639"/>
    </location>
</feature>
<feature type="binding site" evidence="1">
    <location>
        <begin position="13"/>
        <end position="18"/>
    </location>
    <ligand>
        <name>FAD</name>
        <dbReference type="ChEBI" id="CHEBI:57692"/>
    </ligand>
</feature>
<feature type="binding site" evidence="1">
    <location>
        <begin position="274"/>
        <end position="288"/>
    </location>
    <ligand>
        <name>NAD(+)</name>
        <dbReference type="ChEBI" id="CHEBI:57540"/>
    </ligand>
</feature>
<name>MNMG_BORPD</name>
<evidence type="ECO:0000255" key="1">
    <source>
        <dbReference type="HAMAP-Rule" id="MF_00129"/>
    </source>
</evidence>
<protein>
    <recommendedName>
        <fullName evidence="1">tRNA uridine 5-carboxymethylaminomethyl modification enzyme MnmG</fullName>
    </recommendedName>
    <alternativeName>
        <fullName evidence="1">Glucose-inhibited division protein A</fullName>
    </alternativeName>
</protein>
<comment type="function">
    <text evidence="1">NAD-binding protein involved in the addition of a carboxymethylaminomethyl (cmnm) group at the wobble position (U34) of certain tRNAs, forming tRNA-cmnm(5)s(2)U34.</text>
</comment>
<comment type="cofactor">
    <cofactor evidence="1">
        <name>FAD</name>
        <dbReference type="ChEBI" id="CHEBI:57692"/>
    </cofactor>
</comment>
<comment type="subunit">
    <text evidence="1">Homodimer. Heterotetramer of two MnmE and two MnmG subunits.</text>
</comment>
<comment type="subcellular location">
    <subcellularLocation>
        <location evidence="1">Cytoplasm</location>
    </subcellularLocation>
</comment>
<comment type="similarity">
    <text evidence="1">Belongs to the MnmG family.</text>
</comment>
<gene>
    <name evidence="1" type="primary">mnmG</name>
    <name evidence="1" type="synonym">gidA</name>
    <name type="ordered locus">Bpet4977</name>
</gene>
<organism>
    <name type="scientific">Bordetella petrii (strain ATCC BAA-461 / DSM 12804 / CCUG 43448)</name>
    <dbReference type="NCBI Taxonomy" id="340100"/>
    <lineage>
        <taxon>Bacteria</taxon>
        <taxon>Pseudomonadati</taxon>
        <taxon>Pseudomonadota</taxon>
        <taxon>Betaproteobacteria</taxon>
        <taxon>Burkholderiales</taxon>
        <taxon>Alcaligenaceae</taxon>
        <taxon>Bordetella</taxon>
    </lineage>
</organism>
<accession>A9IJ48</accession>
<reference key="1">
    <citation type="journal article" date="2008" name="BMC Genomics">
        <title>The missing link: Bordetella petrii is endowed with both the metabolic versatility of environmental bacteria and virulence traits of pathogenic Bordetellae.</title>
        <authorList>
            <person name="Gross R."/>
            <person name="Guzman C.A."/>
            <person name="Sebaihia M."/>
            <person name="Martin dos Santos V.A.P."/>
            <person name="Pieper D.H."/>
            <person name="Koebnik R."/>
            <person name="Lechner M."/>
            <person name="Bartels D."/>
            <person name="Buhrmester J."/>
            <person name="Choudhuri J.V."/>
            <person name="Ebensen T."/>
            <person name="Gaigalat L."/>
            <person name="Herrmann S."/>
            <person name="Khachane A.N."/>
            <person name="Larisch C."/>
            <person name="Link S."/>
            <person name="Linke B."/>
            <person name="Meyer F."/>
            <person name="Mormann S."/>
            <person name="Nakunst D."/>
            <person name="Rueckert C."/>
            <person name="Schneiker-Bekel S."/>
            <person name="Schulze K."/>
            <person name="Voerholter F.-J."/>
            <person name="Yevsa T."/>
            <person name="Engle J.T."/>
            <person name="Goldman W.E."/>
            <person name="Puehler A."/>
            <person name="Goebel U.B."/>
            <person name="Goesmann A."/>
            <person name="Bloecker H."/>
            <person name="Kaiser O."/>
            <person name="Martinez-Arias R."/>
        </authorList>
    </citation>
    <scope>NUCLEOTIDE SEQUENCE [LARGE SCALE GENOMIC DNA]</scope>
    <source>
        <strain>ATCC BAA-461 / DSM 12804 / CCUG 43448</strain>
    </source>
</reference>
<keyword id="KW-0963">Cytoplasm</keyword>
<keyword id="KW-0274">FAD</keyword>
<keyword id="KW-0285">Flavoprotein</keyword>
<keyword id="KW-0520">NAD</keyword>
<keyword id="KW-0819">tRNA processing</keyword>
<proteinExistence type="inferred from homology"/>
<sequence length="639" mass="69962">MDYPREFDVIVVGGGHAGTEAALAAARIGAKTLLLTHNIETLGQMSCNPSIGGIGKGHLVKEVDALGGAMALATDEAGIQFRILNGSKGPAVRATRAQADRVLYRKAIRSRLENQPGLWIFQQAVDDLMVEGDRVVGAVTQIGLKFRGRTVVLTAGTFLNGLIHVGLQNYSGGRAGDPPATSLGQRLKELQLPQGRLKTGTPPRIDGRTIDYSVLEEQPGDLDPVPVFSFLGNAAMHPRQLPCWITHTNARTHDIIRGGLDRSPMYSGVIEGVGPRYCPSIEDKIHRFADKASHQVFLEPEGLDTHEVYPNGVSTSLPFDVQWDLIHSLPGLENAHILRPGYAIEYDYFDPRALKSTLETKAIGGLYFAGQINGTTGYEEAAAQGLLAGANAALQALDRDTWTPRRDEAYLGVLVDDLVTRGVTEPYRMFTSRAEYRLSLREDNADLRLTEIGRKLGLVDDARWDAFSRKRDAVAAEVERLKSTWVNPRNFPAETAEPLLGKAIEREYSLSDLLKRPAVSYAALMRARNADGSLLAGPGVTDDDILAEQVEIQVKYAGYIARQQDEVQKHLAHEQQRIPADIDYDAVSSLSFEVRQKLKTHRPETIGQAARISGVTPAAISLLLIHLKRLHYGSRKQAA</sequence>
<dbReference type="EMBL" id="AM902716">
    <property type="protein sequence ID" value="CAP45329.1"/>
    <property type="molecule type" value="Genomic_DNA"/>
</dbReference>
<dbReference type="SMR" id="A9IJ48"/>
<dbReference type="STRING" id="94624.Bpet4977"/>
<dbReference type="KEGG" id="bpt:Bpet4977"/>
<dbReference type="eggNOG" id="COG0445">
    <property type="taxonomic scope" value="Bacteria"/>
</dbReference>
<dbReference type="Proteomes" id="UP000001225">
    <property type="component" value="Chromosome"/>
</dbReference>
<dbReference type="GO" id="GO:0005829">
    <property type="term" value="C:cytosol"/>
    <property type="evidence" value="ECO:0007669"/>
    <property type="project" value="TreeGrafter"/>
</dbReference>
<dbReference type="GO" id="GO:0050660">
    <property type="term" value="F:flavin adenine dinucleotide binding"/>
    <property type="evidence" value="ECO:0007669"/>
    <property type="project" value="UniProtKB-UniRule"/>
</dbReference>
<dbReference type="GO" id="GO:0030488">
    <property type="term" value="P:tRNA methylation"/>
    <property type="evidence" value="ECO:0007669"/>
    <property type="project" value="TreeGrafter"/>
</dbReference>
<dbReference type="GO" id="GO:0002098">
    <property type="term" value="P:tRNA wobble uridine modification"/>
    <property type="evidence" value="ECO:0007669"/>
    <property type="project" value="InterPro"/>
</dbReference>
<dbReference type="FunFam" id="1.10.10.1800:FF:000001">
    <property type="entry name" value="tRNA uridine 5-carboxymethylaminomethyl modification enzyme MnmG"/>
    <property type="match status" value="1"/>
</dbReference>
<dbReference type="FunFam" id="1.10.150.570:FF:000001">
    <property type="entry name" value="tRNA uridine 5-carboxymethylaminomethyl modification enzyme MnmG"/>
    <property type="match status" value="1"/>
</dbReference>
<dbReference type="FunFam" id="3.50.50.60:FF:000002">
    <property type="entry name" value="tRNA uridine 5-carboxymethylaminomethyl modification enzyme MnmG"/>
    <property type="match status" value="1"/>
</dbReference>
<dbReference type="FunFam" id="3.50.50.60:FF:000010">
    <property type="entry name" value="tRNA uridine 5-carboxymethylaminomethyl modification enzyme MnmG"/>
    <property type="match status" value="1"/>
</dbReference>
<dbReference type="Gene3D" id="3.50.50.60">
    <property type="entry name" value="FAD/NAD(P)-binding domain"/>
    <property type="match status" value="2"/>
</dbReference>
<dbReference type="Gene3D" id="1.10.150.570">
    <property type="entry name" value="GidA associated domain, C-terminal subdomain"/>
    <property type="match status" value="1"/>
</dbReference>
<dbReference type="Gene3D" id="1.10.10.1800">
    <property type="entry name" value="tRNA uridine 5-carboxymethylaminomethyl modification enzyme MnmG/GidA"/>
    <property type="match status" value="1"/>
</dbReference>
<dbReference type="HAMAP" id="MF_00129">
    <property type="entry name" value="MnmG_GidA"/>
    <property type="match status" value="1"/>
</dbReference>
<dbReference type="InterPro" id="IPR036188">
    <property type="entry name" value="FAD/NAD-bd_sf"/>
</dbReference>
<dbReference type="InterPro" id="IPR049312">
    <property type="entry name" value="GIDA_C_N"/>
</dbReference>
<dbReference type="InterPro" id="IPR004416">
    <property type="entry name" value="MnmG"/>
</dbReference>
<dbReference type="InterPro" id="IPR002218">
    <property type="entry name" value="MnmG-rel"/>
</dbReference>
<dbReference type="InterPro" id="IPR020595">
    <property type="entry name" value="MnmG-rel_CS"/>
</dbReference>
<dbReference type="InterPro" id="IPR026904">
    <property type="entry name" value="MnmG_C"/>
</dbReference>
<dbReference type="InterPro" id="IPR047001">
    <property type="entry name" value="MnmG_C_subdom"/>
</dbReference>
<dbReference type="InterPro" id="IPR044920">
    <property type="entry name" value="MnmG_C_subdom_sf"/>
</dbReference>
<dbReference type="InterPro" id="IPR040131">
    <property type="entry name" value="MnmG_N"/>
</dbReference>
<dbReference type="NCBIfam" id="TIGR00136">
    <property type="entry name" value="mnmG_gidA"/>
    <property type="match status" value="1"/>
</dbReference>
<dbReference type="PANTHER" id="PTHR11806">
    <property type="entry name" value="GLUCOSE INHIBITED DIVISION PROTEIN A"/>
    <property type="match status" value="1"/>
</dbReference>
<dbReference type="PANTHER" id="PTHR11806:SF0">
    <property type="entry name" value="PROTEIN MTO1 HOMOLOG, MITOCHONDRIAL"/>
    <property type="match status" value="1"/>
</dbReference>
<dbReference type="Pfam" id="PF01134">
    <property type="entry name" value="GIDA"/>
    <property type="match status" value="1"/>
</dbReference>
<dbReference type="Pfam" id="PF21680">
    <property type="entry name" value="GIDA_C_1st"/>
    <property type="match status" value="1"/>
</dbReference>
<dbReference type="Pfam" id="PF13932">
    <property type="entry name" value="SAM_GIDA_C"/>
    <property type="match status" value="1"/>
</dbReference>
<dbReference type="SMART" id="SM01228">
    <property type="entry name" value="GIDA_assoc_3"/>
    <property type="match status" value="1"/>
</dbReference>
<dbReference type="SUPFAM" id="SSF51905">
    <property type="entry name" value="FAD/NAD(P)-binding domain"/>
    <property type="match status" value="1"/>
</dbReference>
<dbReference type="PROSITE" id="PS01280">
    <property type="entry name" value="GIDA_1"/>
    <property type="match status" value="1"/>
</dbReference>
<dbReference type="PROSITE" id="PS01281">
    <property type="entry name" value="GIDA_2"/>
    <property type="match status" value="1"/>
</dbReference>